<name>THID_STRCO</name>
<sequence>MTAPTPPVTPPLVLTVAGSDSGGGAGIQADLKTMLALGTHGMSVLTAVTAQNSRGVQGAWELPVEAVRAQYRSVVDDIGVQAVKTGMLSSAELVETVAELLAGTDAPAVVDPVGVSKHGDALLASSALESVRTRLLPVATVATPNLDEVAQLTGVRVDDETDLRRAAAAVLAFGPRWALIKGGHLAGDAVDLLTDGSEEHWLRAPRLDNRHTHGTGCTLASAVACGLAKGQSVPVAVRAAKEYVTGAITAGFPLGGGIGPVDHGWALGE</sequence>
<gene>
    <name type="primary">thiD</name>
    <name type="ordered locus">SCO5563</name>
    <name type="ORF">SC7A1.07</name>
</gene>
<reference key="1">
    <citation type="journal article" date="2002" name="Nature">
        <title>Complete genome sequence of the model actinomycete Streptomyces coelicolor A3(2).</title>
        <authorList>
            <person name="Bentley S.D."/>
            <person name="Chater K.F."/>
            <person name="Cerdeno-Tarraga A.-M."/>
            <person name="Challis G.L."/>
            <person name="Thomson N.R."/>
            <person name="James K.D."/>
            <person name="Harris D.E."/>
            <person name="Quail M.A."/>
            <person name="Kieser H."/>
            <person name="Harper D."/>
            <person name="Bateman A."/>
            <person name="Brown S."/>
            <person name="Chandra G."/>
            <person name="Chen C.W."/>
            <person name="Collins M."/>
            <person name="Cronin A."/>
            <person name="Fraser A."/>
            <person name="Goble A."/>
            <person name="Hidalgo J."/>
            <person name="Hornsby T."/>
            <person name="Howarth S."/>
            <person name="Huang C.-H."/>
            <person name="Kieser T."/>
            <person name="Larke L."/>
            <person name="Murphy L.D."/>
            <person name="Oliver K."/>
            <person name="O'Neil S."/>
            <person name="Rabbinowitsch E."/>
            <person name="Rajandream M.A."/>
            <person name="Rutherford K.M."/>
            <person name="Rutter S."/>
            <person name="Seeger K."/>
            <person name="Saunders D."/>
            <person name="Sharp S."/>
            <person name="Squares R."/>
            <person name="Squares S."/>
            <person name="Taylor K."/>
            <person name="Warren T."/>
            <person name="Wietzorrek A."/>
            <person name="Woodward J.R."/>
            <person name="Barrell B.G."/>
            <person name="Parkhill J."/>
            <person name="Hopwood D.A."/>
        </authorList>
    </citation>
    <scope>NUCLEOTIDE SEQUENCE [LARGE SCALE GENOMIC DNA]</scope>
    <source>
        <strain>ATCC BAA-471 / A3(2) / M145</strain>
    </source>
</reference>
<evidence type="ECO:0000250" key="1"/>
<evidence type="ECO:0000250" key="2">
    <source>
        <dbReference type="UniProtKB" id="P76422"/>
    </source>
</evidence>
<evidence type="ECO:0000305" key="3"/>
<protein>
    <recommendedName>
        <fullName>Hydroxymethylpyrimidine/phosphomethylpyrimidine kinase</fullName>
        <ecNumber evidence="2">2.7.1.49</ecNumber>
        <ecNumber evidence="2">2.7.4.7</ecNumber>
    </recommendedName>
    <alternativeName>
        <fullName>Hydroxymethylpyrimidine kinase</fullName>
        <shortName>HMP kinase</shortName>
    </alternativeName>
    <alternativeName>
        <fullName>Hydroxymethylpyrimidine phosphate kinase</fullName>
        <shortName>HMP-P kinase</shortName>
        <shortName>HMP-phosphate kinase</shortName>
        <shortName>HMPP kinase</shortName>
    </alternativeName>
</protein>
<dbReference type="EC" id="2.7.1.49" evidence="2"/>
<dbReference type="EC" id="2.7.4.7" evidence="2"/>
<dbReference type="EMBL" id="AL939124">
    <property type="protein sequence ID" value="CAA22406.1"/>
    <property type="molecule type" value="Genomic_DNA"/>
</dbReference>
<dbReference type="PIR" id="T35647">
    <property type="entry name" value="T35647"/>
</dbReference>
<dbReference type="RefSeq" id="NP_629698.1">
    <property type="nucleotide sequence ID" value="NC_003888.3"/>
</dbReference>
<dbReference type="RefSeq" id="WP_003973431.1">
    <property type="nucleotide sequence ID" value="NZ_VNID01000011.1"/>
</dbReference>
<dbReference type="SMR" id="Q9ZBR6"/>
<dbReference type="FunCoup" id="Q9ZBR6">
    <property type="interactions" value="189"/>
</dbReference>
<dbReference type="STRING" id="100226.gene:17763221"/>
<dbReference type="PaxDb" id="100226-SCO5563"/>
<dbReference type="GeneID" id="91383464"/>
<dbReference type="KEGG" id="sco:SCO5563"/>
<dbReference type="PATRIC" id="fig|100226.15.peg.5652"/>
<dbReference type="eggNOG" id="COG0351">
    <property type="taxonomic scope" value="Bacteria"/>
</dbReference>
<dbReference type="HOGENOM" id="CLU_020520_0_0_11"/>
<dbReference type="InParanoid" id="Q9ZBR6"/>
<dbReference type="OrthoDB" id="34166at2"/>
<dbReference type="PhylomeDB" id="Q9ZBR6"/>
<dbReference type="UniPathway" id="UPA00060">
    <property type="reaction ID" value="UER00137"/>
</dbReference>
<dbReference type="UniPathway" id="UPA00060">
    <property type="reaction ID" value="UER00138"/>
</dbReference>
<dbReference type="Proteomes" id="UP000001973">
    <property type="component" value="Chromosome"/>
</dbReference>
<dbReference type="GO" id="GO:0005829">
    <property type="term" value="C:cytosol"/>
    <property type="evidence" value="ECO:0000318"/>
    <property type="project" value="GO_Central"/>
</dbReference>
<dbReference type="GO" id="GO:0005524">
    <property type="term" value="F:ATP binding"/>
    <property type="evidence" value="ECO:0007669"/>
    <property type="project" value="UniProtKB-KW"/>
</dbReference>
<dbReference type="GO" id="GO:0008902">
    <property type="term" value="F:hydroxymethylpyrimidine kinase activity"/>
    <property type="evidence" value="ECO:0000318"/>
    <property type="project" value="GO_Central"/>
</dbReference>
<dbReference type="GO" id="GO:0008972">
    <property type="term" value="F:phosphomethylpyrimidine kinase activity"/>
    <property type="evidence" value="ECO:0000318"/>
    <property type="project" value="GO_Central"/>
</dbReference>
<dbReference type="GO" id="GO:0009228">
    <property type="term" value="P:thiamine biosynthetic process"/>
    <property type="evidence" value="ECO:0000318"/>
    <property type="project" value="GO_Central"/>
</dbReference>
<dbReference type="GO" id="GO:0009229">
    <property type="term" value="P:thiamine diphosphate biosynthetic process"/>
    <property type="evidence" value="ECO:0007669"/>
    <property type="project" value="UniProtKB-UniPathway"/>
</dbReference>
<dbReference type="CDD" id="cd01169">
    <property type="entry name" value="HMPP_kinase"/>
    <property type="match status" value="1"/>
</dbReference>
<dbReference type="FunFam" id="3.40.1190.20:FF:000003">
    <property type="entry name" value="Phosphomethylpyrimidine kinase ThiD"/>
    <property type="match status" value="1"/>
</dbReference>
<dbReference type="Gene3D" id="3.40.1190.20">
    <property type="match status" value="1"/>
</dbReference>
<dbReference type="InterPro" id="IPR004399">
    <property type="entry name" value="HMP/HMP-P_kinase_dom"/>
</dbReference>
<dbReference type="InterPro" id="IPR013749">
    <property type="entry name" value="PM/HMP-P_kinase-1"/>
</dbReference>
<dbReference type="InterPro" id="IPR029056">
    <property type="entry name" value="Ribokinase-like"/>
</dbReference>
<dbReference type="NCBIfam" id="TIGR00097">
    <property type="entry name" value="HMP-P_kinase"/>
    <property type="match status" value="1"/>
</dbReference>
<dbReference type="PANTHER" id="PTHR20858:SF17">
    <property type="entry name" value="HYDROXYMETHYLPYRIMIDINE_PHOSPHOMETHYLPYRIMIDINE KINASE THI20-RELATED"/>
    <property type="match status" value="1"/>
</dbReference>
<dbReference type="PANTHER" id="PTHR20858">
    <property type="entry name" value="PHOSPHOMETHYLPYRIMIDINE KINASE"/>
    <property type="match status" value="1"/>
</dbReference>
<dbReference type="Pfam" id="PF08543">
    <property type="entry name" value="Phos_pyr_kin"/>
    <property type="match status" value="1"/>
</dbReference>
<dbReference type="SUPFAM" id="SSF53613">
    <property type="entry name" value="Ribokinase-like"/>
    <property type="match status" value="1"/>
</dbReference>
<comment type="function">
    <text evidence="2">Catalyzes the phosphorylation of hydroxymethylpyrimidine phosphate (HMP-P) to HMP-PP, and of HMP to HMP-P.</text>
</comment>
<comment type="catalytic activity">
    <reaction evidence="2">
        <text>4-amino-5-hydroxymethyl-2-methylpyrimidine + ATP = 4-amino-2-methyl-5-(phosphooxymethyl)pyrimidine + ADP + H(+)</text>
        <dbReference type="Rhea" id="RHEA:23096"/>
        <dbReference type="ChEBI" id="CHEBI:15378"/>
        <dbReference type="ChEBI" id="CHEBI:16892"/>
        <dbReference type="ChEBI" id="CHEBI:30616"/>
        <dbReference type="ChEBI" id="CHEBI:58354"/>
        <dbReference type="ChEBI" id="CHEBI:456216"/>
        <dbReference type="EC" id="2.7.1.49"/>
    </reaction>
</comment>
<comment type="catalytic activity">
    <reaction evidence="2">
        <text>4-amino-2-methyl-5-(phosphooxymethyl)pyrimidine + ATP = 4-amino-2-methyl-5-(diphosphooxymethyl)pyrimidine + ADP</text>
        <dbReference type="Rhea" id="RHEA:19893"/>
        <dbReference type="ChEBI" id="CHEBI:30616"/>
        <dbReference type="ChEBI" id="CHEBI:57841"/>
        <dbReference type="ChEBI" id="CHEBI:58354"/>
        <dbReference type="ChEBI" id="CHEBI:456216"/>
        <dbReference type="EC" id="2.7.4.7"/>
    </reaction>
</comment>
<comment type="pathway">
    <text>Cofactor biosynthesis; thiamine diphosphate biosynthesis; 4-amino-2-methyl-5-diphosphomethylpyrimidine from 5-amino-1-(5-phospho-D-ribosyl)imidazole: step 2/3.</text>
</comment>
<comment type="pathway">
    <text>Cofactor biosynthesis; thiamine diphosphate biosynthesis; 4-amino-2-methyl-5-diphosphomethylpyrimidine from 5-amino-1-(5-phospho-D-ribosyl)imidazole: step 3/3.</text>
</comment>
<comment type="similarity">
    <text evidence="3">Belongs to the ThiD family.</text>
</comment>
<organism>
    <name type="scientific">Streptomyces coelicolor (strain ATCC BAA-471 / A3(2) / M145)</name>
    <dbReference type="NCBI Taxonomy" id="100226"/>
    <lineage>
        <taxon>Bacteria</taxon>
        <taxon>Bacillati</taxon>
        <taxon>Actinomycetota</taxon>
        <taxon>Actinomycetes</taxon>
        <taxon>Kitasatosporales</taxon>
        <taxon>Streptomycetaceae</taxon>
        <taxon>Streptomyces</taxon>
        <taxon>Streptomyces albidoflavus group</taxon>
    </lineage>
</organism>
<feature type="chain" id="PRO_0000192035" description="Hydroxymethylpyrimidine/phosphomethylpyrimidine kinase">
    <location>
        <begin position="1"/>
        <end position="269"/>
    </location>
</feature>
<feature type="binding site" evidence="1">
    <location>
        <position position="51"/>
    </location>
    <ligand>
        <name>4-amino-5-hydroxymethyl-2-methylpyrimidine</name>
        <dbReference type="ChEBI" id="CHEBI:16892"/>
    </ligand>
</feature>
<proteinExistence type="inferred from homology"/>
<accession>Q9ZBR6</accession>
<keyword id="KW-0067">ATP-binding</keyword>
<keyword id="KW-0418">Kinase</keyword>
<keyword id="KW-0547">Nucleotide-binding</keyword>
<keyword id="KW-1185">Reference proteome</keyword>
<keyword id="KW-0784">Thiamine biosynthesis</keyword>
<keyword id="KW-0808">Transferase</keyword>